<reference key="1">
    <citation type="journal article" date="1997" name="DNA Res.">
        <title>Structural analysis of Arabidopsis thaliana chromosome 5. III. Sequence features of the regions of 1,191,918 bp covered by seventeen physically assigned P1 clones.</title>
        <authorList>
            <person name="Nakamura Y."/>
            <person name="Sato S."/>
            <person name="Kaneko T."/>
            <person name="Kotani H."/>
            <person name="Asamizu E."/>
            <person name="Miyajima N."/>
            <person name="Tabata S."/>
        </authorList>
    </citation>
    <scope>NUCLEOTIDE SEQUENCE [LARGE SCALE GENOMIC DNA]</scope>
    <source>
        <strain>cv. Columbia</strain>
    </source>
</reference>
<reference key="2">
    <citation type="journal article" date="2017" name="Plant J.">
        <title>Araport11: a complete reannotation of the Arabidopsis thaliana reference genome.</title>
        <authorList>
            <person name="Cheng C.Y."/>
            <person name="Krishnakumar V."/>
            <person name="Chan A.P."/>
            <person name="Thibaud-Nissen F."/>
            <person name="Schobel S."/>
            <person name="Town C.D."/>
        </authorList>
    </citation>
    <scope>GENOME REANNOTATION</scope>
    <source>
        <strain>cv. Columbia</strain>
    </source>
</reference>
<reference key="3">
    <citation type="journal article" date="2003" name="Science">
        <title>Empirical analysis of transcriptional activity in the Arabidopsis genome.</title>
        <authorList>
            <person name="Yamada K."/>
            <person name="Lim J."/>
            <person name="Dale J.M."/>
            <person name="Chen H."/>
            <person name="Shinn P."/>
            <person name="Palm C.J."/>
            <person name="Southwick A.M."/>
            <person name="Wu H.C."/>
            <person name="Kim C.J."/>
            <person name="Nguyen M."/>
            <person name="Pham P.K."/>
            <person name="Cheuk R.F."/>
            <person name="Karlin-Newmann G."/>
            <person name="Liu S.X."/>
            <person name="Lam B."/>
            <person name="Sakano H."/>
            <person name="Wu T."/>
            <person name="Yu G."/>
            <person name="Miranda M."/>
            <person name="Quach H.L."/>
            <person name="Tripp M."/>
            <person name="Chang C.H."/>
            <person name="Lee J.M."/>
            <person name="Toriumi M.J."/>
            <person name="Chan M.M."/>
            <person name="Tang C.C."/>
            <person name="Onodera C.S."/>
            <person name="Deng J.M."/>
            <person name="Akiyama K."/>
            <person name="Ansari Y."/>
            <person name="Arakawa T."/>
            <person name="Banh J."/>
            <person name="Banno F."/>
            <person name="Bowser L."/>
            <person name="Brooks S.Y."/>
            <person name="Carninci P."/>
            <person name="Chao Q."/>
            <person name="Choy N."/>
            <person name="Enju A."/>
            <person name="Goldsmith A.D."/>
            <person name="Gurjal M."/>
            <person name="Hansen N.F."/>
            <person name="Hayashizaki Y."/>
            <person name="Johnson-Hopson C."/>
            <person name="Hsuan V.W."/>
            <person name="Iida K."/>
            <person name="Karnes M."/>
            <person name="Khan S."/>
            <person name="Koesema E."/>
            <person name="Ishida J."/>
            <person name="Jiang P.X."/>
            <person name="Jones T."/>
            <person name="Kawai J."/>
            <person name="Kamiya A."/>
            <person name="Meyers C."/>
            <person name="Nakajima M."/>
            <person name="Narusaka M."/>
            <person name="Seki M."/>
            <person name="Sakurai T."/>
            <person name="Satou M."/>
            <person name="Tamse R."/>
            <person name="Vaysberg M."/>
            <person name="Wallender E.K."/>
            <person name="Wong C."/>
            <person name="Yamamura Y."/>
            <person name="Yuan S."/>
            <person name="Shinozaki K."/>
            <person name="Davis R.W."/>
            <person name="Theologis A."/>
            <person name="Ecker J.R."/>
        </authorList>
    </citation>
    <scope>NUCLEOTIDE SEQUENCE [LARGE SCALE MRNA]</scope>
    <source>
        <strain>cv. Columbia</strain>
    </source>
</reference>
<reference key="4">
    <citation type="submission" date="2006-07" db="EMBL/GenBank/DDBJ databases">
        <title>Large-scale analysis of RIKEN Arabidopsis full-length (RAFL) cDNAs.</title>
        <authorList>
            <person name="Totoki Y."/>
            <person name="Seki M."/>
            <person name="Ishida J."/>
            <person name="Nakajima M."/>
            <person name="Enju A."/>
            <person name="Kamiya A."/>
            <person name="Narusaka M."/>
            <person name="Shin-i T."/>
            <person name="Nakagawa M."/>
            <person name="Sakamoto N."/>
            <person name="Oishi K."/>
            <person name="Kohara Y."/>
            <person name="Kobayashi M."/>
            <person name="Toyoda A."/>
            <person name="Sakaki Y."/>
            <person name="Sakurai T."/>
            <person name="Iida K."/>
            <person name="Akiyama K."/>
            <person name="Satou M."/>
            <person name="Toyoda T."/>
            <person name="Konagaya A."/>
            <person name="Carninci P."/>
            <person name="Kawai J."/>
            <person name="Hayashizaki Y."/>
            <person name="Shinozaki K."/>
        </authorList>
    </citation>
    <scope>NUCLEOTIDE SEQUENCE [LARGE SCALE MRNA] OF 466-827</scope>
    <source>
        <strain>cv. Columbia</strain>
    </source>
</reference>
<dbReference type="EMBL" id="AB007727">
    <property type="protein sequence ID" value="BAB10033.1"/>
    <property type="molecule type" value="Genomic_DNA"/>
</dbReference>
<dbReference type="EMBL" id="CP002688">
    <property type="protein sequence ID" value="AED91768.1"/>
    <property type="molecule type" value="Genomic_DNA"/>
</dbReference>
<dbReference type="EMBL" id="AK229992">
    <property type="protein sequence ID" value="BAF01816.1"/>
    <property type="molecule type" value="mRNA"/>
</dbReference>
<dbReference type="EMBL" id="AY065176">
    <property type="protein sequence ID" value="AAL38352.1"/>
    <property type="molecule type" value="mRNA"/>
</dbReference>
<dbReference type="RefSeq" id="NP_196776.1">
    <molecule id="Q9FMP8-1"/>
    <property type="nucleotide sequence ID" value="NM_121253.5"/>
</dbReference>
<dbReference type="SMR" id="Q9FMP8"/>
<dbReference type="FunCoup" id="Q9FMP8">
    <property type="interactions" value="150"/>
</dbReference>
<dbReference type="STRING" id="3702.Q9FMP8"/>
<dbReference type="iPTMnet" id="Q9FMP8"/>
<dbReference type="PaxDb" id="3702-AT5G12150.1"/>
<dbReference type="ProteomicsDB" id="236963">
    <molecule id="Q9FMP8-1"/>
</dbReference>
<dbReference type="EnsemblPlants" id="AT5G12150.1">
    <molecule id="Q9FMP8-1"/>
    <property type="protein sequence ID" value="AT5G12150.1"/>
    <property type="gene ID" value="AT5G12150"/>
</dbReference>
<dbReference type="GeneID" id="831088"/>
<dbReference type="Gramene" id="AT5G12150.1">
    <molecule id="Q9FMP8-1"/>
    <property type="protein sequence ID" value="AT5G12150.1"/>
    <property type="gene ID" value="AT5G12150"/>
</dbReference>
<dbReference type="KEGG" id="ath:AT5G12150"/>
<dbReference type="Araport" id="AT5G12150"/>
<dbReference type="TAIR" id="AT5G12150">
    <property type="gene designation" value="PHGAP1"/>
</dbReference>
<dbReference type="eggNOG" id="KOG4271">
    <property type="taxonomic scope" value="Eukaryota"/>
</dbReference>
<dbReference type="HOGENOM" id="CLU_011283_1_0_1"/>
<dbReference type="InParanoid" id="Q9FMP8"/>
<dbReference type="OMA" id="DQNVVQQ"/>
<dbReference type="PhylomeDB" id="Q9FMP8"/>
<dbReference type="PRO" id="PR:Q9FMP8"/>
<dbReference type="Proteomes" id="UP000006548">
    <property type="component" value="Chromosome 5"/>
</dbReference>
<dbReference type="ExpressionAtlas" id="Q9FMP8">
    <property type="expression patterns" value="baseline and differential"/>
</dbReference>
<dbReference type="GO" id="GO:0005737">
    <property type="term" value="C:cytoplasm"/>
    <property type="evidence" value="ECO:0000314"/>
    <property type="project" value="TAIR"/>
</dbReference>
<dbReference type="GO" id="GO:0005886">
    <property type="term" value="C:plasma membrane"/>
    <property type="evidence" value="ECO:0000314"/>
    <property type="project" value="TAIR"/>
</dbReference>
<dbReference type="GO" id="GO:0005096">
    <property type="term" value="F:GTPase activator activity"/>
    <property type="evidence" value="ECO:0000250"/>
    <property type="project" value="TAIR"/>
</dbReference>
<dbReference type="GO" id="GO:0009920">
    <property type="term" value="P:cell plate formation involved in plant-type cell wall biogenesis"/>
    <property type="evidence" value="ECO:0000316"/>
    <property type="project" value="TAIR"/>
</dbReference>
<dbReference type="GO" id="GO:0007165">
    <property type="term" value="P:signal transduction"/>
    <property type="evidence" value="ECO:0007669"/>
    <property type="project" value="InterPro"/>
</dbReference>
<dbReference type="CDD" id="cd00821">
    <property type="entry name" value="PH"/>
    <property type="match status" value="1"/>
</dbReference>
<dbReference type="CDD" id="cd00159">
    <property type="entry name" value="RhoGAP"/>
    <property type="match status" value="1"/>
</dbReference>
<dbReference type="FunFam" id="2.30.29.30:FF:000302">
    <property type="entry name" value="Rho GTPase-activating protein 7"/>
    <property type="match status" value="1"/>
</dbReference>
<dbReference type="FunFam" id="1.10.555.10:FF:000052">
    <property type="entry name" value="Rho GTPase-activating protein REN1"/>
    <property type="match status" value="1"/>
</dbReference>
<dbReference type="Gene3D" id="2.30.29.30">
    <property type="entry name" value="Pleckstrin-homology domain (PH domain)/Phosphotyrosine-binding domain (PTB)"/>
    <property type="match status" value="1"/>
</dbReference>
<dbReference type="Gene3D" id="1.10.555.10">
    <property type="entry name" value="Rho GTPase activation protein"/>
    <property type="match status" value="1"/>
</dbReference>
<dbReference type="InterPro" id="IPR025757">
    <property type="entry name" value="MIP1_Leuzipper"/>
</dbReference>
<dbReference type="InterPro" id="IPR011993">
    <property type="entry name" value="PH-like_dom_sf"/>
</dbReference>
<dbReference type="InterPro" id="IPR001849">
    <property type="entry name" value="PH_domain"/>
</dbReference>
<dbReference type="InterPro" id="IPR052799">
    <property type="entry name" value="Rho_GAP_Regulators"/>
</dbReference>
<dbReference type="InterPro" id="IPR008936">
    <property type="entry name" value="Rho_GTPase_activation_prot"/>
</dbReference>
<dbReference type="InterPro" id="IPR000198">
    <property type="entry name" value="RhoGAP_dom"/>
</dbReference>
<dbReference type="PANTHER" id="PTHR46265:SF8">
    <property type="entry name" value="RHO GTPASE-ACTIVATING PROTEIN 6"/>
    <property type="match status" value="1"/>
</dbReference>
<dbReference type="PANTHER" id="PTHR46265">
    <property type="entry name" value="RHO GTPASE-ACTIVATING PROTEIN 7"/>
    <property type="match status" value="1"/>
</dbReference>
<dbReference type="Pfam" id="PF14389">
    <property type="entry name" value="Lzipper-MIP1"/>
    <property type="match status" value="1"/>
</dbReference>
<dbReference type="Pfam" id="PF00169">
    <property type="entry name" value="PH"/>
    <property type="match status" value="1"/>
</dbReference>
<dbReference type="Pfam" id="PF00620">
    <property type="entry name" value="RhoGAP"/>
    <property type="match status" value="1"/>
</dbReference>
<dbReference type="SMART" id="SM00233">
    <property type="entry name" value="PH"/>
    <property type="match status" value="1"/>
</dbReference>
<dbReference type="SMART" id="SM00324">
    <property type="entry name" value="RhoGAP"/>
    <property type="match status" value="1"/>
</dbReference>
<dbReference type="SUPFAM" id="SSF48350">
    <property type="entry name" value="GTPase activation domain, GAP"/>
    <property type="match status" value="1"/>
</dbReference>
<dbReference type="SUPFAM" id="SSF50729">
    <property type="entry name" value="PH domain-like"/>
    <property type="match status" value="1"/>
</dbReference>
<dbReference type="PROSITE" id="PS50003">
    <property type="entry name" value="PH_DOMAIN"/>
    <property type="match status" value="1"/>
</dbReference>
<dbReference type="PROSITE" id="PS50238">
    <property type="entry name" value="RHOGAP"/>
    <property type="match status" value="1"/>
</dbReference>
<feature type="chain" id="PRO_0000422721" description="Rho GTPase-activating protein 6">
    <location>
        <begin position="1"/>
        <end position="827"/>
    </location>
</feature>
<feature type="domain" description="PH" evidence="3">
    <location>
        <begin position="18"/>
        <end position="125"/>
    </location>
</feature>
<feature type="domain" description="Rho-GAP" evidence="4">
    <location>
        <begin position="172"/>
        <end position="371"/>
    </location>
</feature>
<feature type="region of interest" description="Disordered" evidence="5">
    <location>
        <begin position="379"/>
        <end position="437"/>
    </location>
</feature>
<feature type="region of interest" description="Disordered" evidence="5">
    <location>
        <begin position="517"/>
        <end position="561"/>
    </location>
</feature>
<feature type="coiled-coil region" evidence="2">
    <location>
        <begin position="560"/>
        <end position="684"/>
    </location>
</feature>
<feature type="compositionally biased region" description="Basic and acidic residues" evidence="5">
    <location>
        <begin position="401"/>
        <end position="412"/>
    </location>
</feature>
<feature type="compositionally biased region" description="Acidic residues" evidence="5">
    <location>
        <begin position="413"/>
        <end position="423"/>
    </location>
</feature>
<feature type="compositionally biased region" description="Polar residues" evidence="5">
    <location>
        <begin position="517"/>
        <end position="543"/>
    </location>
</feature>
<feature type="site" description="Arginine finger; crucial for GTP hydrolysis by stabilizing the transition state" evidence="4">
    <location>
        <position position="203"/>
    </location>
</feature>
<sequence length="827" mass="91352">MEASLAVIQRPQAGASNTVYKSGPLFISSKGLGWTSWKKRWFILTRTSLVFFKNDPSALPQKGGEVNLTLGGIDLNSSGSVVVREDKKLLTVLFPDGRDGRAFTLKAETLDDLYEWKAALEQALAQAPNAALVIGQNGIFRTEANNTIEASFNSWRDQRPLKSSVVGRPILLALEEIDGSPSFLEKALQFLETYGTKVEGILRQSADVEEVERRVQEYEQGKTEFSPEEDPHVVGDCVKHVLRQLPSSPVPASCCTALLEAYKIDQNEARVNSLRSAIIETFPEPNRRLLLRMLKMMHTITSHSSENRMTSSAVAACMSPLLLRPLLAGECDLEGFDTLGDNSAQLLAAANAANNAQAIVTALLEDYGNMINDEGLGRCSTSTDSHIGDSGPENSSDEEEIVVKHPDLHTLDIEEGETDDDNDVLLSRKPSESSDYAGSDLYDYKGFGVEDSDAESPRDIHCSVESTDFSARVKKHIEEPIKDIEVSSVSPTENCYQSGREAIPSVTPSTPLTALRYTTSAEKPASKTTGSSTVNSKRSSSWGRGNGKKTPAKGSFDSSGNDELLIQRLEHMKDELRQRIAKEAKGNAALQASLERRKQALHERRLALEQDVGRLQEQLQAERDLRSALEVGLSISCGQFSSQAADSKTRAELEEIALAEADVARLKQKVAELHHQLSQQRQHHLSSLPDAQSHHQFLHNHNTQLKSFQQDFDSILAFVNHERNQRTDETSLRADWRNGRGNNRQVPGSPSLNAASLGIPMEEYSPVMDYGRHHHPPATSAALMELTTRLDFFKERRSQLMEQIQNLDLNYGSSSSSLHRSSSPPWN</sequence>
<comment type="function">
    <text evidence="1">Acts as a GTPase activator for the Rac-type GTPase by converting it to an inactive GDP-bound state.</text>
</comment>
<comment type="alternative products">
    <event type="alternative splicing"/>
    <isoform>
        <id>Q9FMP8-1</id>
        <name>1</name>
        <sequence type="displayed"/>
    </isoform>
    <text>A number of isoforms are produced. According to EST sequences.</text>
</comment>
<evidence type="ECO:0000250" key="1"/>
<evidence type="ECO:0000255" key="2"/>
<evidence type="ECO:0000255" key="3">
    <source>
        <dbReference type="PROSITE-ProRule" id="PRU00145"/>
    </source>
</evidence>
<evidence type="ECO:0000255" key="4">
    <source>
        <dbReference type="PROSITE-ProRule" id="PRU00172"/>
    </source>
</evidence>
<evidence type="ECO:0000256" key="5">
    <source>
        <dbReference type="SAM" id="MobiDB-lite"/>
    </source>
</evidence>
<keyword id="KW-0025">Alternative splicing</keyword>
<keyword id="KW-0175">Coiled coil</keyword>
<keyword id="KW-0343">GTPase activation</keyword>
<keyword id="KW-1185">Reference proteome</keyword>
<gene>
    <name type="primary">ROPGAP6</name>
    <name type="ordered locus">At5g12150</name>
    <name type="ORF">MXC9.11</name>
</gene>
<organism>
    <name type="scientific">Arabidopsis thaliana</name>
    <name type="common">Mouse-ear cress</name>
    <dbReference type="NCBI Taxonomy" id="3702"/>
    <lineage>
        <taxon>Eukaryota</taxon>
        <taxon>Viridiplantae</taxon>
        <taxon>Streptophyta</taxon>
        <taxon>Embryophyta</taxon>
        <taxon>Tracheophyta</taxon>
        <taxon>Spermatophyta</taxon>
        <taxon>Magnoliopsida</taxon>
        <taxon>eudicotyledons</taxon>
        <taxon>Gunneridae</taxon>
        <taxon>Pentapetalae</taxon>
        <taxon>rosids</taxon>
        <taxon>malvids</taxon>
        <taxon>Brassicales</taxon>
        <taxon>Brassicaceae</taxon>
        <taxon>Camelineae</taxon>
        <taxon>Arabidopsis</taxon>
    </lineage>
</organism>
<protein>
    <recommendedName>
        <fullName>Rho GTPase-activating protein 6</fullName>
    </recommendedName>
    <alternativeName>
        <fullName>Rho-type GTPase-activating protein 6</fullName>
    </alternativeName>
</protein>
<accession>Q9FMP8</accession>
<accession>Q0WM40</accession>
<name>RGAP6_ARATH</name>
<proteinExistence type="evidence at transcript level"/>